<gene>
    <name evidence="1" type="primary">nqrF</name>
    <name type="ordered locus">Patl_0457</name>
</gene>
<keyword id="KW-0001">2Fe-2S</keyword>
<keyword id="KW-0997">Cell inner membrane</keyword>
<keyword id="KW-1003">Cell membrane</keyword>
<keyword id="KW-0274">FAD</keyword>
<keyword id="KW-0285">Flavoprotein</keyword>
<keyword id="KW-0406">Ion transport</keyword>
<keyword id="KW-0408">Iron</keyword>
<keyword id="KW-0411">Iron-sulfur</keyword>
<keyword id="KW-0472">Membrane</keyword>
<keyword id="KW-0479">Metal-binding</keyword>
<keyword id="KW-0520">NAD</keyword>
<keyword id="KW-0915">Sodium</keyword>
<keyword id="KW-0739">Sodium transport</keyword>
<keyword id="KW-1278">Translocase</keyword>
<keyword id="KW-0812">Transmembrane</keyword>
<keyword id="KW-1133">Transmembrane helix</keyword>
<keyword id="KW-0813">Transport</keyword>
<keyword id="KW-0830">Ubiquinone</keyword>
<sequence>MLDIYLGVGMFIAIVLALVLIIMFAKSKLVPEGEVTISINGDPDKAITAQPGDKLLGALANSGIFVSSACGGGGSCGQCRVDIKAGGGEILPTELDHISKREAKEGCRLSCQVSIKQDMDIELPEEIFGIKKWDCEVISNDNKATFIKELKLKIPNGESVPFRAGGYIQIEAPPHHVKYKDFDVPEEYRGDWERFGFFDIESKVDDETIRAYSMANYPEEEGIIMLNVRVASPPPNNLSLPAGKMSSYIWSLKEGDKATISGPFGEFFAKKTDAEMVFIGGGAGMAPMRSHIFDQLRRLKTDRKISFWYGARSLREMFYVEDFDMLQKENDNFKWHVALSDPQPEDNWEGMTGFIHQVLLENYLKDHPAPEDCEFYMCGPPMMNAAVISMLKDLGVEDENIMLDDFGG</sequence>
<feature type="chain" id="PRO_1000080588" description="Na(+)-translocating NADH-quinone reductase subunit F">
    <location>
        <begin position="1"/>
        <end position="408"/>
    </location>
</feature>
<feature type="transmembrane region" description="Helical" evidence="1">
    <location>
        <begin position="4"/>
        <end position="24"/>
    </location>
</feature>
<feature type="domain" description="2Fe-2S ferredoxin-type" evidence="1">
    <location>
        <begin position="33"/>
        <end position="127"/>
    </location>
</feature>
<feature type="domain" description="FAD-binding FR-type" evidence="1">
    <location>
        <begin position="130"/>
        <end position="270"/>
    </location>
</feature>
<feature type="binding site" evidence="1">
    <location>
        <position position="70"/>
    </location>
    <ligand>
        <name>[2Fe-2S] cluster</name>
        <dbReference type="ChEBI" id="CHEBI:190135"/>
    </ligand>
</feature>
<feature type="binding site" evidence="1">
    <location>
        <position position="76"/>
    </location>
    <ligand>
        <name>[2Fe-2S] cluster</name>
        <dbReference type="ChEBI" id="CHEBI:190135"/>
    </ligand>
</feature>
<feature type="binding site" evidence="1">
    <location>
        <position position="79"/>
    </location>
    <ligand>
        <name>[2Fe-2S] cluster</name>
        <dbReference type="ChEBI" id="CHEBI:190135"/>
    </ligand>
</feature>
<feature type="binding site" evidence="1">
    <location>
        <position position="111"/>
    </location>
    <ligand>
        <name>[2Fe-2S] cluster</name>
        <dbReference type="ChEBI" id="CHEBI:190135"/>
    </ligand>
</feature>
<name>NQRF_PSEA6</name>
<organism>
    <name type="scientific">Pseudoalteromonas atlantica (strain T6c / ATCC BAA-1087)</name>
    <dbReference type="NCBI Taxonomy" id="3042615"/>
    <lineage>
        <taxon>Bacteria</taxon>
        <taxon>Pseudomonadati</taxon>
        <taxon>Pseudomonadota</taxon>
        <taxon>Gammaproteobacteria</taxon>
        <taxon>Alteromonadales</taxon>
        <taxon>Alteromonadaceae</taxon>
        <taxon>Paraglaciecola</taxon>
    </lineage>
</organism>
<evidence type="ECO:0000255" key="1">
    <source>
        <dbReference type="HAMAP-Rule" id="MF_00430"/>
    </source>
</evidence>
<comment type="function">
    <text evidence="1">NQR complex catalyzes the reduction of ubiquinone-1 to ubiquinol by two successive reactions, coupled with the transport of Na(+) ions from the cytoplasm to the periplasm. The first step is catalyzed by NqrF, which accepts electrons from NADH and reduces ubiquinone-1 to ubisemiquinone by a one-electron transfer pathway.</text>
</comment>
<comment type="catalytic activity">
    <reaction evidence="1">
        <text>a ubiquinone + n Na(+)(in) + NADH + H(+) = a ubiquinol + n Na(+)(out) + NAD(+)</text>
        <dbReference type="Rhea" id="RHEA:47748"/>
        <dbReference type="Rhea" id="RHEA-COMP:9565"/>
        <dbReference type="Rhea" id="RHEA-COMP:9566"/>
        <dbReference type="ChEBI" id="CHEBI:15378"/>
        <dbReference type="ChEBI" id="CHEBI:16389"/>
        <dbReference type="ChEBI" id="CHEBI:17976"/>
        <dbReference type="ChEBI" id="CHEBI:29101"/>
        <dbReference type="ChEBI" id="CHEBI:57540"/>
        <dbReference type="ChEBI" id="CHEBI:57945"/>
        <dbReference type="EC" id="7.2.1.1"/>
    </reaction>
</comment>
<comment type="cofactor">
    <cofactor evidence="1">
        <name>[2Fe-2S] cluster</name>
        <dbReference type="ChEBI" id="CHEBI:190135"/>
    </cofactor>
    <text evidence="1">Binds 1 [2Fe-2S] cluster.</text>
</comment>
<comment type="cofactor">
    <cofactor evidence="1">
        <name>FAD</name>
        <dbReference type="ChEBI" id="CHEBI:57692"/>
    </cofactor>
</comment>
<comment type="subunit">
    <text evidence="1">Composed of six subunits; NqrA, NqrB, NqrC, NqrD, NqrE and NqrF.</text>
</comment>
<comment type="subcellular location">
    <subcellularLocation>
        <location evidence="1">Cell inner membrane</location>
        <topology evidence="1">Single-pass membrane protein</topology>
    </subcellularLocation>
</comment>
<comment type="similarity">
    <text evidence="1">Belongs to the NqrF family.</text>
</comment>
<protein>
    <recommendedName>
        <fullName evidence="1">Na(+)-translocating NADH-quinone reductase subunit F</fullName>
        <shortName evidence="1">Na(+)-NQR subunit F</shortName>
        <shortName evidence="1">Na(+)-translocating NQR subunit F</shortName>
        <ecNumber evidence="1">7.2.1.1</ecNumber>
    </recommendedName>
    <alternativeName>
        <fullName evidence="1">NQR complex subunit F</fullName>
    </alternativeName>
    <alternativeName>
        <fullName evidence="1">NQR-1 subunit F</fullName>
    </alternativeName>
</protein>
<proteinExistence type="inferred from homology"/>
<dbReference type="EC" id="7.2.1.1" evidence="1"/>
<dbReference type="EMBL" id="CP000388">
    <property type="protein sequence ID" value="ABG38987.1"/>
    <property type="molecule type" value="Genomic_DNA"/>
</dbReference>
<dbReference type="RefSeq" id="WP_011573380.1">
    <property type="nucleotide sequence ID" value="NC_008228.1"/>
</dbReference>
<dbReference type="SMR" id="Q15YQ1"/>
<dbReference type="STRING" id="342610.Patl_0457"/>
<dbReference type="KEGG" id="pat:Patl_0457"/>
<dbReference type="eggNOG" id="COG2871">
    <property type="taxonomic scope" value="Bacteria"/>
</dbReference>
<dbReference type="HOGENOM" id="CLU_003827_7_2_6"/>
<dbReference type="OrthoDB" id="9806195at2"/>
<dbReference type="Proteomes" id="UP000001981">
    <property type="component" value="Chromosome"/>
</dbReference>
<dbReference type="GO" id="GO:0005886">
    <property type="term" value="C:plasma membrane"/>
    <property type="evidence" value="ECO:0007669"/>
    <property type="project" value="UniProtKB-SubCell"/>
</dbReference>
<dbReference type="GO" id="GO:0051537">
    <property type="term" value="F:2 iron, 2 sulfur cluster binding"/>
    <property type="evidence" value="ECO:0007669"/>
    <property type="project" value="UniProtKB-KW"/>
</dbReference>
<dbReference type="GO" id="GO:0009055">
    <property type="term" value="F:electron transfer activity"/>
    <property type="evidence" value="ECO:0007669"/>
    <property type="project" value="UniProtKB-UniRule"/>
</dbReference>
<dbReference type="GO" id="GO:0046872">
    <property type="term" value="F:metal ion binding"/>
    <property type="evidence" value="ECO:0007669"/>
    <property type="project" value="UniProtKB-KW"/>
</dbReference>
<dbReference type="GO" id="GO:0016655">
    <property type="term" value="F:oxidoreductase activity, acting on NAD(P)H, quinone or similar compound as acceptor"/>
    <property type="evidence" value="ECO:0007669"/>
    <property type="project" value="InterPro"/>
</dbReference>
<dbReference type="GO" id="GO:0006814">
    <property type="term" value="P:sodium ion transport"/>
    <property type="evidence" value="ECO:0007669"/>
    <property type="project" value="UniProtKB-UniRule"/>
</dbReference>
<dbReference type="CDD" id="cd06188">
    <property type="entry name" value="NADH_quinone_reductase"/>
    <property type="match status" value="1"/>
</dbReference>
<dbReference type="FunFam" id="2.40.30.10:FF:000064">
    <property type="entry name" value="Na(+)-translocating NADH-quinone reductase subunit F"/>
    <property type="match status" value="1"/>
</dbReference>
<dbReference type="FunFam" id="3.40.50.80:FF:000014">
    <property type="entry name" value="Na(+)-translocating NADH-quinone reductase subunit F"/>
    <property type="match status" value="1"/>
</dbReference>
<dbReference type="Gene3D" id="3.10.20.30">
    <property type="match status" value="1"/>
</dbReference>
<dbReference type="Gene3D" id="3.40.50.80">
    <property type="entry name" value="Nucleotide-binding domain of ferredoxin-NADP reductase (FNR) module"/>
    <property type="match status" value="1"/>
</dbReference>
<dbReference type="Gene3D" id="2.40.30.10">
    <property type="entry name" value="Translation factors"/>
    <property type="match status" value="1"/>
</dbReference>
<dbReference type="HAMAP" id="MF_00430">
    <property type="entry name" value="NqrF"/>
    <property type="match status" value="1"/>
</dbReference>
<dbReference type="InterPro" id="IPR036010">
    <property type="entry name" value="2Fe-2S_ferredoxin-like_sf"/>
</dbReference>
<dbReference type="InterPro" id="IPR001041">
    <property type="entry name" value="2Fe-2S_ferredoxin-type"/>
</dbReference>
<dbReference type="InterPro" id="IPR012675">
    <property type="entry name" value="Beta-grasp_dom_sf"/>
</dbReference>
<dbReference type="InterPro" id="IPR008333">
    <property type="entry name" value="Cbr1-like_FAD-bd_dom"/>
</dbReference>
<dbReference type="InterPro" id="IPR017927">
    <property type="entry name" value="FAD-bd_FR_type"/>
</dbReference>
<dbReference type="InterPro" id="IPR039261">
    <property type="entry name" value="FNR_nucleotide-bd"/>
</dbReference>
<dbReference type="InterPro" id="IPR010205">
    <property type="entry name" value="NqrF"/>
</dbReference>
<dbReference type="InterPro" id="IPR001433">
    <property type="entry name" value="OxRdtase_FAD/NAD-bd"/>
</dbReference>
<dbReference type="InterPro" id="IPR017938">
    <property type="entry name" value="Riboflavin_synthase-like_b-brl"/>
</dbReference>
<dbReference type="NCBIfam" id="TIGR01941">
    <property type="entry name" value="nqrF"/>
    <property type="match status" value="1"/>
</dbReference>
<dbReference type="PANTHER" id="PTHR43644">
    <property type="entry name" value="NA(+)-TRANSLOCATING NADH-QUINONE REDUCTASE SUBUNIT"/>
    <property type="match status" value="1"/>
</dbReference>
<dbReference type="PANTHER" id="PTHR43644:SF1">
    <property type="entry name" value="NAD(P)H-FLAVIN REDUCTASE"/>
    <property type="match status" value="1"/>
</dbReference>
<dbReference type="Pfam" id="PF00970">
    <property type="entry name" value="FAD_binding_6"/>
    <property type="match status" value="1"/>
</dbReference>
<dbReference type="Pfam" id="PF00111">
    <property type="entry name" value="Fer2"/>
    <property type="match status" value="1"/>
</dbReference>
<dbReference type="Pfam" id="PF00175">
    <property type="entry name" value="NAD_binding_1"/>
    <property type="match status" value="1"/>
</dbReference>
<dbReference type="PIRSF" id="PIRSF000044">
    <property type="entry name" value="Cis_Diol_DH_RD"/>
    <property type="match status" value="1"/>
</dbReference>
<dbReference type="SUPFAM" id="SSF54292">
    <property type="entry name" value="2Fe-2S ferredoxin-like"/>
    <property type="match status" value="1"/>
</dbReference>
<dbReference type="SUPFAM" id="SSF52343">
    <property type="entry name" value="Ferredoxin reductase-like, C-terminal NADP-linked domain"/>
    <property type="match status" value="1"/>
</dbReference>
<dbReference type="SUPFAM" id="SSF63380">
    <property type="entry name" value="Riboflavin synthase domain-like"/>
    <property type="match status" value="1"/>
</dbReference>
<dbReference type="PROSITE" id="PS51085">
    <property type="entry name" value="2FE2S_FER_2"/>
    <property type="match status" value="1"/>
</dbReference>
<dbReference type="PROSITE" id="PS51384">
    <property type="entry name" value="FAD_FR"/>
    <property type="match status" value="1"/>
</dbReference>
<reference key="1">
    <citation type="submission" date="2006-06" db="EMBL/GenBank/DDBJ databases">
        <title>Complete sequence of Pseudoalteromonas atlantica T6c.</title>
        <authorList>
            <consortium name="US DOE Joint Genome Institute"/>
            <person name="Copeland A."/>
            <person name="Lucas S."/>
            <person name="Lapidus A."/>
            <person name="Barry K."/>
            <person name="Detter J.C."/>
            <person name="Glavina del Rio T."/>
            <person name="Hammon N."/>
            <person name="Israni S."/>
            <person name="Dalin E."/>
            <person name="Tice H."/>
            <person name="Pitluck S."/>
            <person name="Saunders E."/>
            <person name="Brettin T."/>
            <person name="Bruce D."/>
            <person name="Han C."/>
            <person name="Tapia R."/>
            <person name="Gilna P."/>
            <person name="Schmutz J."/>
            <person name="Larimer F."/>
            <person name="Land M."/>
            <person name="Hauser L."/>
            <person name="Kyrpides N."/>
            <person name="Kim E."/>
            <person name="Karls A.C."/>
            <person name="Bartlett D."/>
            <person name="Higgins B.P."/>
            <person name="Richardson P."/>
        </authorList>
    </citation>
    <scope>NUCLEOTIDE SEQUENCE [LARGE SCALE GENOMIC DNA]</scope>
    <source>
        <strain>T6c / ATCC BAA-1087</strain>
    </source>
</reference>
<accession>Q15YQ1</accession>